<gene>
    <name evidence="1" type="primary">rplX</name>
    <name type="ordered locus">SNSL254_A3698</name>
</gene>
<comment type="function">
    <text evidence="1">One of two assembly initiator proteins, it binds directly to the 5'-end of the 23S rRNA, where it nucleates assembly of the 50S subunit.</text>
</comment>
<comment type="function">
    <text evidence="1">One of the proteins that surrounds the polypeptide exit tunnel on the outside of the subunit.</text>
</comment>
<comment type="subunit">
    <text evidence="1">Part of the 50S ribosomal subunit.</text>
</comment>
<comment type="similarity">
    <text evidence="1">Belongs to the universal ribosomal protein uL24 family.</text>
</comment>
<dbReference type="EMBL" id="CP001113">
    <property type="protein sequence ID" value="ACF63918.1"/>
    <property type="molecule type" value="Genomic_DNA"/>
</dbReference>
<dbReference type="RefSeq" id="WP_000729185.1">
    <property type="nucleotide sequence ID" value="NZ_CCMR01000003.1"/>
</dbReference>
<dbReference type="SMR" id="B4SUS9"/>
<dbReference type="GeneID" id="93778678"/>
<dbReference type="KEGG" id="see:SNSL254_A3698"/>
<dbReference type="HOGENOM" id="CLU_093315_2_2_6"/>
<dbReference type="Proteomes" id="UP000008824">
    <property type="component" value="Chromosome"/>
</dbReference>
<dbReference type="GO" id="GO:0005829">
    <property type="term" value="C:cytosol"/>
    <property type="evidence" value="ECO:0007669"/>
    <property type="project" value="UniProtKB-ARBA"/>
</dbReference>
<dbReference type="GO" id="GO:1990904">
    <property type="term" value="C:ribonucleoprotein complex"/>
    <property type="evidence" value="ECO:0007669"/>
    <property type="project" value="UniProtKB-KW"/>
</dbReference>
<dbReference type="GO" id="GO:0005840">
    <property type="term" value="C:ribosome"/>
    <property type="evidence" value="ECO:0007669"/>
    <property type="project" value="UniProtKB-KW"/>
</dbReference>
<dbReference type="GO" id="GO:0019843">
    <property type="term" value="F:rRNA binding"/>
    <property type="evidence" value="ECO:0007669"/>
    <property type="project" value="UniProtKB-UniRule"/>
</dbReference>
<dbReference type="GO" id="GO:0003735">
    <property type="term" value="F:structural constituent of ribosome"/>
    <property type="evidence" value="ECO:0007669"/>
    <property type="project" value="InterPro"/>
</dbReference>
<dbReference type="GO" id="GO:0006412">
    <property type="term" value="P:translation"/>
    <property type="evidence" value="ECO:0007669"/>
    <property type="project" value="UniProtKB-UniRule"/>
</dbReference>
<dbReference type="CDD" id="cd06089">
    <property type="entry name" value="KOW_RPL26"/>
    <property type="match status" value="1"/>
</dbReference>
<dbReference type="FunFam" id="2.30.30.30:FF:000004">
    <property type="entry name" value="50S ribosomal protein L24"/>
    <property type="match status" value="1"/>
</dbReference>
<dbReference type="Gene3D" id="2.30.30.30">
    <property type="match status" value="1"/>
</dbReference>
<dbReference type="HAMAP" id="MF_01326_B">
    <property type="entry name" value="Ribosomal_uL24_B"/>
    <property type="match status" value="1"/>
</dbReference>
<dbReference type="InterPro" id="IPR005824">
    <property type="entry name" value="KOW"/>
</dbReference>
<dbReference type="InterPro" id="IPR014722">
    <property type="entry name" value="Rib_uL2_dom2"/>
</dbReference>
<dbReference type="InterPro" id="IPR003256">
    <property type="entry name" value="Ribosomal_uL24"/>
</dbReference>
<dbReference type="InterPro" id="IPR005825">
    <property type="entry name" value="Ribosomal_uL24_CS"/>
</dbReference>
<dbReference type="InterPro" id="IPR041988">
    <property type="entry name" value="Ribosomal_uL24_KOW"/>
</dbReference>
<dbReference type="InterPro" id="IPR008991">
    <property type="entry name" value="Translation_prot_SH3-like_sf"/>
</dbReference>
<dbReference type="NCBIfam" id="TIGR01079">
    <property type="entry name" value="rplX_bact"/>
    <property type="match status" value="1"/>
</dbReference>
<dbReference type="PANTHER" id="PTHR12903">
    <property type="entry name" value="MITOCHONDRIAL RIBOSOMAL PROTEIN L24"/>
    <property type="match status" value="1"/>
</dbReference>
<dbReference type="Pfam" id="PF00467">
    <property type="entry name" value="KOW"/>
    <property type="match status" value="1"/>
</dbReference>
<dbReference type="Pfam" id="PF17136">
    <property type="entry name" value="ribosomal_L24"/>
    <property type="match status" value="1"/>
</dbReference>
<dbReference type="SMART" id="SM00739">
    <property type="entry name" value="KOW"/>
    <property type="match status" value="1"/>
</dbReference>
<dbReference type="SUPFAM" id="SSF50104">
    <property type="entry name" value="Translation proteins SH3-like domain"/>
    <property type="match status" value="1"/>
</dbReference>
<dbReference type="PROSITE" id="PS01108">
    <property type="entry name" value="RIBOSOMAL_L24"/>
    <property type="match status" value="1"/>
</dbReference>
<proteinExistence type="inferred from homology"/>
<name>RL24_SALNS</name>
<reference key="1">
    <citation type="journal article" date="2011" name="J. Bacteriol.">
        <title>Comparative genomics of 28 Salmonella enterica isolates: evidence for CRISPR-mediated adaptive sublineage evolution.</title>
        <authorList>
            <person name="Fricke W.F."/>
            <person name="Mammel M.K."/>
            <person name="McDermott P.F."/>
            <person name="Tartera C."/>
            <person name="White D.G."/>
            <person name="Leclerc J.E."/>
            <person name="Ravel J."/>
            <person name="Cebula T.A."/>
        </authorList>
    </citation>
    <scope>NUCLEOTIDE SEQUENCE [LARGE SCALE GENOMIC DNA]</scope>
    <source>
        <strain>SL254</strain>
    </source>
</reference>
<protein>
    <recommendedName>
        <fullName evidence="1">Large ribosomal subunit protein uL24</fullName>
    </recommendedName>
    <alternativeName>
        <fullName evidence="2">50S ribosomal protein L24</fullName>
    </alternativeName>
</protein>
<evidence type="ECO:0000255" key="1">
    <source>
        <dbReference type="HAMAP-Rule" id="MF_01326"/>
    </source>
</evidence>
<evidence type="ECO:0000305" key="2"/>
<sequence length="104" mass="11316">MAAKIRRDDEVIVLTGKDKGKRGKVKNVLSSGKVIVEGINLVKKHQKPVPALNQPGGIVEKEAAIQVSNVAIFNAATGKADRVGFRFEDGKKVRFFKSNSETIK</sequence>
<keyword id="KW-0687">Ribonucleoprotein</keyword>
<keyword id="KW-0689">Ribosomal protein</keyword>
<keyword id="KW-0694">RNA-binding</keyword>
<keyword id="KW-0699">rRNA-binding</keyword>
<accession>B4SUS9</accession>
<feature type="chain" id="PRO_1000142036" description="Large ribosomal subunit protein uL24">
    <location>
        <begin position="1"/>
        <end position="104"/>
    </location>
</feature>
<organism>
    <name type="scientific">Salmonella newport (strain SL254)</name>
    <dbReference type="NCBI Taxonomy" id="423368"/>
    <lineage>
        <taxon>Bacteria</taxon>
        <taxon>Pseudomonadati</taxon>
        <taxon>Pseudomonadota</taxon>
        <taxon>Gammaproteobacteria</taxon>
        <taxon>Enterobacterales</taxon>
        <taxon>Enterobacteriaceae</taxon>
        <taxon>Salmonella</taxon>
    </lineage>
</organism>